<evidence type="ECO:0000255" key="1">
    <source>
        <dbReference type="HAMAP-Rule" id="MF_00227"/>
    </source>
</evidence>
<gene>
    <name evidence="1" type="primary">rnpA</name>
    <name type="ordered locus">LBUL_2038</name>
</gene>
<sequence>MRKSYRIKSEQDFQTVFENGESVANRAFVIYVLPRKQNKHFRVGISVGKKVGHTAVVRNRLKRYIRAVLTENRDRIAPDLDFLVIARPYAHDFDWEKTRENLLHALNLAHVIEEMPNKEEK</sequence>
<comment type="function">
    <text evidence="1">RNaseP catalyzes the removal of the 5'-leader sequence from pre-tRNA to produce the mature 5'-terminus. It can also cleave other RNA substrates such as 4.5S RNA. The protein component plays an auxiliary but essential role in vivo by binding to the 5'-leader sequence and broadening the substrate specificity of the ribozyme.</text>
</comment>
<comment type="catalytic activity">
    <reaction evidence="1">
        <text>Endonucleolytic cleavage of RNA, removing 5'-extranucleotides from tRNA precursor.</text>
        <dbReference type="EC" id="3.1.26.5"/>
    </reaction>
</comment>
<comment type="subunit">
    <text evidence="1">Consists of a catalytic RNA component (M1 or rnpB) and a protein subunit.</text>
</comment>
<comment type="similarity">
    <text evidence="1">Belongs to the RnpA family.</text>
</comment>
<name>RNPA_LACDB</name>
<dbReference type="EC" id="3.1.26.5" evidence="1"/>
<dbReference type="EMBL" id="CP000412">
    <property type="protein sequence ID" value="ABJ59415.1"/>
    <property type="molecule type" value="Genomic_DNA"/>
</dbReference>
<dbReference type="RefSeq" id="WP_003622144.1">
    <property type="nucleotide sequence ID" value="NC_008529.1"/>
</dbReference>
<dbReference type="SMR" id="Q047F7"/>
<dbReference type="KEGG" id="lbu:LBUL_2038"/>
<dbReference type="HOGENOM" id="CLU_117179_9_1_9"/>
<dbReference type="BioCyc" id="LDEL321956:LBUL_RS09645-MONOMER"/>
<dbReference type="GO" id="GO:0030677">
    <property type="term" value="C:ribonuclease P complex"/>
    <property type="evidence" value="ECO:0007669"/>
    <property type="project" value="TreeGrafter"/>
</dbReference>
<dbReference type="GO" id="GO:0042781">
    <property type="term" value="F:3'-tRNA processing endoribonuclease activity"/>
    <property type="evidence" value="ECO:0007669"/>
    <property type="project" value="TreeGrafter"/>
</dbReference>
<dbReference type="GO" id="GO:0004526">
    <property type="term" value="F:ribonuclease P activity"/>
    <property type="evidence" value="ECO:0007669"/>
    <property type="project" value="UniProtKB-UniRule"/>
</dbReference>
<dbReference type="GO" id="GO:0000049">
    <property type="term" value="F:tRNA binding"/>
    <property type="evidence" value="ECO:0007669"/>
    <property type="project" value="UniProtKB-UniRule"/>
</dbReference>
<dbReference type="GO" id="GO:0001682">
    <property type="term" value="P:tRNA 5'-leader removal"/>
    <property type="evidence" value="ECO:0007669"/>
    <property type="project" value="UniProtKB-UniRule"/>
</dbReference>
<dbReference type="FunFam" id="3.30.230.10:FF:000021">
    <property type="entry name" value="Ribonuclease P protein component"/>
    <property type="match status" value="1"/>
</dbReference>
<dbReference type="Gene3D" id="3.30.230.10">
    <property type="match status" value="1"/>
</dbReference>
<dbReference type="HAMAP" id="MF_00227">
    <property type="entry name" value="RNase_P"/>
    <property type="match status" value="1"/>
</dbReference>
<dbReference type="InterPro" id="IPR020568">
    <property type="entry name" value="Ribosomal_Su5_D2-typ_SF"/>
</dbReference>
<dbReference type="InterPro" id="IPR014721">
    <property type="entry name" value="Ribsml_uS5_D2-typ_fold_subgr"/>
</dbReference>
<dbReference type="InterPro" id="IPR000100">
    <property type="entry name" value="RNase_P"/>
</dbReference>
<dbReference type="NCBIfam" id="TIGR00188">
    <property type="entry name" value="rnpA"/>
    <property type="match status" value="1"/>
</dbReference>
<dbReference type="PANTHER" id="PTHR33992">
    <property type="entry name" value="RIBONUCLEASE P PROTEIN COMPONENT"/>
    <property type="match status" value="1"/>
</dbReference>
<dbReference type="PANTHER" id="PTHR33992:SF1">
    <property type="entry name" value="RIBONUCLEASE P PROTEIN COMPONENT"/>
    <property type="match status" value="1"/>
</dbReference>
<dbReference type="Pfam" id="PF00825">
    <property type="entry name" value="Ribonuclease_P"/>
    <property type="match status" value="1"/>
</dbReference>
<dbReference type="SUPFAM" id="SSF54211">
    <property type="entry name" value="Ribosomal protein S5 domain 2-like"/>
    <property type="match status" value="1"/>
</dbReference>
<organism>
    <name type="scientific">Lactobacillus delbrueckii subsp. bulgaricus (strain ATCC BAA-365 / Lb-18)</name>
    <dbReference type="NCBI Taxonomy" id="321956"/>
    <lineage>
        <taxon>Bacteria</taxon>
        <taxon>Bacillati</taxon>
        <taxon>Bacillota</taxon>
        <taxon>Bacilli</taxon>
        <taxon>Lactobacillales</taxon>
        <taxon>Lactobacillaceae</taxon>
        <taxon>Lactobacillus</taxon>
    </lineage>
</organism>
<accession>Q047F7</accession>
<protein>
    <recommendedName>
        <fullName evidence="1">Ribonuclease P protein component</fullName>
        <shortName evidence="1">RNase P protein</shortName>
        <shortName evidence="1">RNaseP protein</shortName>
        <ecNumber evidence="1">3.1.26.5</ecNumber>
    </recommendedName>
    <alternativeName>
        <fullName evidence="1">Protein C5</fullName>
    </alternativeName>
</protein>
<proteinExistence type="inferred from homology"/>
<keyword id="KW-0255">Endonuclease</keyword>
<keyword id="KW-0378">Hydrolase</keyword>
<keyword id="KW-0540">Nuclease</keyword>
<keyword id="KW-0694">RNA-binding</keyword>
<keyword id="KW-0819">tRNA processing</keyword>
<feature type="chain" id="PRO_1000021417" description="Ribonuclease P protein component">
    <location>
        <begin position="1"/>
        <end position="121"/>
    </location>
</feature>
<reference key="1">
    <citation type="journal article" date="2006" name="Proc. Natl. Acad. Sci. U.S.A.">
        <title>Comparative genomics of the lactic acid bacteria.</title>
        <authorList>
            <person name="Makarova K.S."/>
            <person name="Slesarev A."/>
            <person name="Wolf Y.I."/>
            <person name="Sorokin A."/>
            <person name="Mirkin B."/>
            <person name="Koonin E.V."/>
            <person name="Pavlov A."/>
            <person name="Pavlova N."/>
            <person name="Karamychev V."/>
            <person name="Polouchine N."/>
            <person name="Shakhova V."/>
            <person name="Grigoriev I."/>
            <person name="Lou Y."/>
            <person name="Rohksar D."/>
            <person name="Lucas S."/>
            <person name="Huang K."/>
            <person name="Goodstein D.M."/>
            <person name="Hawkins T."/>
            <person name="Plengvidhya V."/>
            <person name="Welker D."/>
            <person name="Hughes J."/>
            <person name="Goh Y."/>
            <person name="Benson A."/>
            <person name="Baldwin K."/>
            <person name="Lee J.-H."/>
            <person name="Diaz-Muniz I."/>
            <person name="Dosti B."/>
            <person name="Smeianov V."/>
            <person name="Wechter W."/>
            <person name="Barabote R."/>
            <person name="Lorca G."/>
            <person name="Altermann E."/>
            <person name="Barrangou R."/>
            <person name="Ganesan B."/>
            <person name="Xie Y."/>
            <person name="Rawsthorne H."/>
            <person name="Tamir D."/>
            <person name="Parker C."/>
            <person name="Breidt F."/>
            <person name="Broadbent J.R."/>
            <person name="Hutkins R."/>
            <person name="O'Sullivan D."/>
            <person name="Steele J."/>
            <person name="Unlu G."/>
            <person name="Saier M.H. Jr."/>
            <person name="Klaenhammer T."/>
            <person name="Richardson P."/>
            <person name="Kozyavkin S."/>
            <person name="Weimer B.C."/>
            <person name="Mills D.A."/>
        </authorList>
    </citation>
    <scope>NUCLEOTIDE SEQUENCE [LARGE SCALE GENOMIC DNA]</scope>
    <source>
        <strain>ATCC BAA-365 / Lb-18</strain>
    </source>
</reference>